<gene>
    <name evidence="1" type="primary">hscB</name>
    <name type="ordered locus">RAF_ORF0246</name>
</gene>
<comment type="function">
    <text evidence="1">Co-chaperone involved in the maturation of iron-sulfur cluster-containing proteins. Seems to help targeting proteins to be folded toward HscA.</text>
</comment>
<comment type="subunit">
    <text evidence="1">Interacts with HscA and stimulates its ATPase activity.</text>
</comment>
<comment type="similarity">
    <text evidence="1">Belongs to the HscB family.</text>
</comment>
<name>HSCB_RICAE</name>
<proteinExistence type="inferred from homology"/>
<protein>
    <recommendedName>
        <fullName evidence="1">Co-chaperone protein HscB homolog</fullName>
    </recommendedName>
</protein>
<feature type="chain" id="PRO_1000212543" description="Co-chaperone protein HscB homolog">
    <location>
        <begin position="1"/>
        <end position="166"/>
    </location>
</feature>
<feature type="domain" description="J" evidence="1">
    <location>
        <begin position="3"/>
        <end position="73"/>
    </location>
</feature>
<evidence type="ECO:0000255" key="1">
    <source>
        <dbReference type="HAMAP-Rule" id="MF_00682"/>
    </source>
</evidence>
<keyword id="KW-0143">Chaperone</keyword>
<accession>C3PMP3</accession>
<reference key="1">
    <citation type="journal article" date="2009" name="BMC Genomics">
        <title>Analysis of the Rickettsia africae genome reveals that virulence acquisition in Rickettsia species may be explained by genome reduction.</title>
        <authorList>
            <person name="Fournier P.-E."/>
            <person name="El Karkouri K."/>
            <person name="Leroy Q."/>
            <person name="Robert C."/>
            <person name="Giumelli B."/>
            <person name="Renesto P."/>
            <person name="Socolovschi C."/>
            <person name="Parola P."/>
            <person name="Audic S."/>
            <person name="Raoult D."/>
        </authorList>
    </citation>
    <scope>NUCLEOTIDE SEQUENCE [LARGE SCALE GENOMIC DNA]</scope>
    <source>
        <strain>ESF-5</strain>
    </source>
</reference>
<organism>
    <name type="scientific">Rickettsia africae (strain ESF-5)</name>
    <dbReference type="NCBI Taxonomy" id="347255"/>
    <lineage>
        <taxon>Bacteria</taxon>
        <taxon>Pseudomonadati</taxon>
        <taxon>Pseudomonadota</taxon>
        <taxon>Alphaproteobacteria</taxon>
        <taxon>Rickettsiales</taxon>
        <taxon>Rickettsiaceae</taxon>
        <taxon>Rickettsieae</taxon>
        <taxon>Rickettsia</taxon>
        <taxon>spotted fever group</taxon>
    </lineage>
</organism>
<dbReference type="EMBL" id="CP001612">
    <property type="protein sequence ID" value="ACP53203.1"/>
    <property type="molecule type" value="Genomic_DNA"/>
</dbReference>
<dbReference type="RefSeq" id="WP_012719466.1">
    <property type="nucleotide sequence ID" value="NC_012633.1"/>
</dbReference>
<dbReference type="SMR" id="C3PMP3"/>
<dbReference type="KEGG" id="raf:RAF_ORF0246"/>
<dbReference type="HOGENOM" id="CLU_068529_2_0_5"/>
<dbReference type="Proteomes" id="UP000002305">
    <property type="component" value="Chromosome"/>
</dbReference>
<dbReference type="GO" id="GO:0001671">
    <property type="term" value="F:ATPase activator activity"/>
    <property type="evidence" value="ECO:0007669"/>
    <property type="project" value="InterPro"/>
</dbReference>
<dbReference type="GO" id="GO:0051087">
    <property type="term" value="F:protein-folding chaperone binding"/>
    <property type="evidence" value="ECO:0007669"/>
    <property type="project" value="InterPro"/>
</dbReference>
<dbReference type="GO" id="GO:0044571">
    <property type="term" value="P:[2Fe-2S] cluster assembly"/>
    <property type="evidence" value="ECO:0007669"/>
    <property type="project" value="InterPro"/>
</dbReference>
<dbReference type="GO" id="GO:0051259">
    <property type="term" value="P:protein complex oligomerization"/>
    <property type="evidence" value="ECO:0007669"/>
    <property type="project" value="InterPro"/>
</dbReference>
<dbReference type="GO" id="GO:0006457">
    <property type="term" value="P:protein folding"/>
    <property type="evidence" value="ECO:0007669"/>
    <property type="project" value="UniProtKB-UniRule"/>
</dbReference>
<dbReference type="CDD" id="cd06257">
    <property type="entry name" value="DnaJ"/>
    <property type="match status" value="1"/>
</dbReference>
<dbReference type="Gene3D" id="1.10.287.110">
    <property type="entry name" value="DnaJ domain"/>
    <property type="match status" value="1"/>
</dbReference>
<dbReference type="HAMAP" id="MF_00682">
    <property type="entry name" value="HscB"/>
    <property type="match status" value="1"/>
</dbReference>
<dbReference type="InterPro" id="IPR001623">
    <property type="entry name" value="DnaJ_domain"/>
</dbReference>
<dbReference type="InterPro" id="IPR004640">
    <property type="entry name" value="HscB"/>
</dbReference>
<dbReference type="InterPro" id="IPR036386">
    <property type="entry name" value="HscB_C_sf"/>
</dbReference>
<dbReference type="InterPro" id="IPR036869">
    <property type="entry name" value="J_dom_sf"/>
</dbReference>
<dbReference type="NCBIfam" id="TIGR00714">
    <property type="entry name" value="hscB"/>
    <property type="match status" value="1"/>
</dbReference>
<dbReference type="PANTHER" id="PTHR14021">
    <property type="entry name" value="IRON-SULFUR CLUSTER CO-CHAPERONE PROTEIN HSCB"/>
    <property type="match status" value="1"/>
</dbReference>
<dbReference type="PANTHER" id="PTHR14021:SF15">
    <property type="entry name" value="IRON-SULFUR CLUSTER CO-CHAPERONE PROTEIN HSCB"/>
    <property type="match status" value="1"/>
</dbReference>
<dbReference type="Pfam" id="PF00226">
    <property type="entry name" value="DnaJ"/>
    <property type="match status" value="1"/>
</dbReference>
<dbReference type="SMART" id="SM00271">
    <property type="entry name" value="DnaJ"/>
    <property type="match status" value="1"/>
</dbReference>
<dbReference type="SUPFAM" id="SSF46565">
    <property type="entry name" value="Chaperone J-domain"/>
    <property type="match status" value="1"/>
</dbReference>
<dbReference type="SUPFAM" id="SSF47144">
    <property type="entry name" value="HSC20 (HSCB), C-terminal oligomerisation domain"/>
    <property type="match status" value="1"/>
</dbReference>
<dbReference type="PROSITE" id="PS50076">
    <property type="entry name" value="DNAJ_2"/>
    <property type="match status" value="1"/>
</dbReference>
<sequence length="166" mass="19594">MQNYFQLLGLPQEYNINLKILEKQYFAMQVKYHPDKAKTLQEKEQNLITAAELNNAYSTLKDALKRAEYMLLLQNINLNDEKTRSLLSPLELSIFWDEMEIIENTILFSDLEKIKDKYELMKKLEIDSLKQAFEEQNLLDATIKTSKLKYIGTLLHKLQEKIKSCK</sequence>